<accession>Q2JTH3</accession>
<sequence>MVETVGGKDAVAPAPARSPSPPAKNLDPLNPLLPAYHFVGIGGVGMSALAYILAKQGFRVSGSDIAANGRTRRLEALGVRFIQGHTLEGLAGDPQVVYSSAIRPTNPELAAALDKGLKVWHRADLLAALFNHRPSIGVAGTHGKTTTSSMIGYMLLAAGWDPTLIIGGEMDAWDGNARLGQGEYLVAEVDESDGSLVRLYPQIGVITNIELDHPDHYANLEQVIRAFQQYGQQSQTLVACLDCPNVATHLKVDIGYSLAGHPQAQYQARQILYTADCTSAEIWERGSLLGQLRLQVLGSHNLSNALAAVAVGRQLGLEFAVIASALAEFRGVQRRFEVKGEVGGVTFIDDYAHHPSEIRATLRAARLQQRRVVAVFQPHRHSRLAKLFQDFACCFADAQVVVIVPTYGAGEAAPEGSDSLRLAVSVAEHHPHVRYVSSLPQLPQVLPSILQPGDLAIFLGAGDLNQQIAATMRAYAARLGEQPLANFEGKLPGQAEDGIREMGASEVLAS</sequence>
<proteinExistence type="inferred from homology"/>
<name>MURC_SYNJA</name>
<comment type="function">
    <text evidence="1">Cell wall formation.</text>
</comment>
<comment type="catalytic activity">
    <reaction evidence="1">
        <text>UDP-N-acetyl-alpha-D-muramate + L-alanine + ATP = UDP-N-acetyl-alpha-D-muramoyl-L-alanine + ADP + phosphate + H(+)</text>
        <dbReference type="Rhea" id="RHEA:23372"/>
        <dbReference type="ChEBI" id="CHEBI:15378"/>
        <dbReference type="ChEBI" id="CHEBI:30616"/>
        <dbReference type="ChEBI" id="CHEBI:43474"/>
        <dbReference type="ChEBI" id="CHEBI:57972"/>
        <dbReference type="ChEBI" id="CHEBI:70757"/>
        <dbReference type="ChEBI" id="CHEBI:83898"/>
        <dbReference type="ChEBI" id="CHEBI:456216"/>
        <dbReference type="EC" id="6.3.2.8"/>
    </reaction>
</comment>
<comment type="pathway">
    <text evidence="1">Cell wall biogenesis; peptidoglycan biosynthesis.</text>
</comment>
<comment type="subcellular location">
    <subcellularLocation>
        <location evidence="1">Cytoplasm</location>
    </subcellularLocation>
</comment>
<comment type="similarity">
    <text evidence="1">Belongs to the MurCDEF family.</text>
</comment>
<evidence type="ECO:0000255" key="1">
    <source>
        <dbReference type="HAMAP-Rule" id="MF_00046"/>
    </source>
</evidence>
<evidence type="ECO:0000256" key="2">
    <source>
        <dbReference type="SAM" id="MobiDB-lite"/>
    </source>
</evidence>
<keyword id="KW-0067">ATP-binding</keyword>
<keyword id="KW-0131">Cell cycle</keyword>
<keyword id="KW-0132">Cell division</keyword>
<keyword id="KW-0133">Cell shape</keyword>
<keyword id="KW-0961">Cell wall biogenesis/degradation</keyword>
<keyword id="KW-0963">Cytoplasm</keyword>
<keyword id="KW-0436">Ligase</keyword>
<keyword id="KW-0547">Nucleotide-binding</keyword>
<keyword id="KW-0573">Peptidoglycan synthesis</keyword>
<protein>
    <recommendedName>
        <fullName evidence="1">UDP-N-acetylmuramate--L-alanine ligase</fullName>
        <ecNumber evidence="1">6.3.2.8</ecNumber>
    </recommendedName>
    <alternativeName>
        <fullName evidence="1">UDP-N-acetylmuramoyl-L-alanine synthetase</fullName>
    </alternativeName>
</protein>
<gene>
    <name evidence="1" type="primary">murC</name>
    <name type="ordered locus">CYA_1876</name>
</gene>
<reference key="1">
    <citation type="journal article" date="2007" name="ISME J.">
        <title>Population level functional diversity in a microbial community revealed by comparative genomic and metagenomic analyses.</title>
        <authorList>
            <person name="Bhaya D."/>
            <person name="Grossman A.R."/>
            <person name="Steunou A.-S."/>
            <person name="Khuri N."/>
            <person name="Cohan F.M."/>
            <person name="Hamamura N."/>
            <person name="Melendrez M.C."/>
            <person name="Bateson M.M."/>
            <person name="Ward D.M."/>
            <person name="Heidelberg J.F."/>
        </authorList>
    </citation>
    <scope>NUCLEOTIDE SEQUENCE [LARGE SCALE GENOMIC DNA]</scope>
    <source>
        <strain>JA-3-3Ab</strain>
    </source>
</reference>
<dbReference type="EC" id="6.3.2.8" evidence="1"/>
<dbReference type="EMBL" id="CP000239">
    <property type="protein sequence ID" value="ABD00024.1"/>
    <property type="molecule type" value="Genomic_DNA"/>
</dbReference>
<dbReference type="RefSeq" id="WP_011430699.1">
    <property type="nucleotide sequence ID" value="NC_007775.1"/>
</dbReference>
<dbReference type="SMR" id="Q2JTH3"/>
<dbReference type="STRING" id="321327.CYA_1876"/>
<dbReference type="KEGG" id="cya:CYA_1876"/>
<dbReference type="eggNOG" id="COG0773">
    <property type="taxonomic scope" value="Bacteria"/>
</dbReference>
<dbReference type="HOGENOM" id="CLU_028104_2_2_3"/>
<dbReference type="OrthoDB" id="9804126at2"/>
<dbReference type="UniPathway" id="UPA00219"/>
<dbReference type="Proteomes" id="UP000008818">
    <property type="component" value="Chromosome"/>
</dbReference>
<dbReference type="GO" id="GO:0005737">
    <property type="term" value="C:cytoplasm"/>
    <property type="evidence" value="ECO:0007669"/>
    <property type="project" value="UniProtKB-SubCell"/>
</dbReference>
<dbReference type="GO" id="GO:0005524">
    <property type="term" value="F:ATP binding"/>
    <property type="evidence" value="ECO:0007669"/>
    <property type="project" value="UniProtKB-UniRule"/>
</dbReference>
<dbReference type="GO" id="GO:0008763">
    <property type="term" value="F:UDP-N-acetylmuramate-L-alanine ligase activity"/>
    <property type="evidence" value="ECO:0007669"/>
    <property type="project" value="UniProtKB-UniRule"/>
</dbReference>
<dbReference type="GO" id="GO:0051301">
    <property type="term" value="P:cell division"/>
    <property type="evidence" value="ECO:0007669"/>
    <property type="project" value="UniProtKB-KW"/>
</dbReference>
<dbReference type="GO" id="GO:0071555">
    <property type="term" value="P:cell wall organization"/>
    <property type="evidence" value="ECO:0007669"/>
    <property type="project" value="UniProtKB-KW"/>
</dbReference>
<dbReference type="GO" id="GO:0009252">
    <property type="term" value="P:peptidoglycan biosynthetic process"/>
    <property type="evidence" value="ECO:0007669"/>
    <property type="project" value="UniProtKB-UniRule"/>
</dbReference>
<dbReference type="GO" id="GO:0008360">
    <property type="term" value="P:regulation of cell shape"/>
    <property type="evidence" value="ECO:0007669"/>
    <property type="project" value="UniProtKB-KW"/>
</dbReference>
<dbReference type="Gene3D" id="3.90.190.20">
    <property type="entry name" value="Mur ligase, C-terminal domain"/>
    <property type="match status" value="1"/>
</dbReference>
<dbReference type="Gene3D" id="3.40.1190.10">
    <property type="entry name" value="Mur-like, catalytic domain"/>
    <property type="match status" value="1"/>
</dbReference>
<dbReference type="Gene3D" id="3.40.50.720">
    <property type="entry name" value="NAD(P)-binding Rossmann-like Domain"/>
    <property type="match status" value="1"/>
</dbReference>
<dbReference type="HAMAP" id="MF_00046">
    <property type="entry name" value="MurC"/>
    <property type="match status" value="1"/>
</dbReference>
<dbReference type="InterPro" id="IPR036565">
    <property type="entry name" value="Mur-like_cat_sf"/>
</dbReference>
<dbReference type="InterPro" id="IPR004101">
    <property type="entry name" value="Mur_ligase_C"/>
</dbReference>
<dbReference type="InterPro" id="IPR036615">
    <property type="entry name" value="Mur_ligase_C_dom_sf"/>
</dbReference>
<dbReference type="InterPro" id="IPR013221">
    <property type="entry name" value="Mur_ligase_cen"/>
</dbReference>
<dbReference type="InterPro" id="IPR000713">
    <property type="entry name" value="Mur_ligase_N"/>
</dbReference>
<dbReference type="InterPro" id="IPR050061">
    <property type="entry name" value="MurCDEF_pg_biosynth"/>
</dbReference>
<dbReference type="InterPro" id="IPR005758">
    <property type="entry name" value="UDP-N-AcMur_Ala_ligase_MurC"/>
</dbReference>
<dbReference type="NCBIfam" id="TIGR01082">
    <property type="entry name" value="murC"/>
    <property type="match status" value="1"/>
</dbReference>
<dbReference type="PANTHER" id="PTHR43445:SF3">
    <property type="entry name" value="UDP-N-ACETYLMURAMATE--L-ALANINE LIGASE"/>
    <property type="match status" value="1"/>
</dbReference>
<dbReference type="PANTHER" id="PTHR43445">
    <property type="entry name" value="UDP-N-ACETYLMURAMATE--L-ALANINE LIGASE-RELATED"/>
    <property type="match status" value="1"/>
</dbReference>
<dbReference type="Pfam" id="PF01225">
    <property type="entry name" value="Mur_ligase"/>
    <property type="match status" value="1"/>
</dbReference>
<dbReference type="Pfam" id="PF02875">
    <property type="entry name" value="Mur_ligase_C"/>
    <property type="match status" value="1"/>
</dbReference>
<dbReference type="Pfam" id="PF08245">
    <property type="entry name" value="Mur_ligase_M"/>
    <property type="match status" value="1"/>
</dbReference>
<dbReference type="SUPFAM" id="SSF51984">
    <property type="entry name" value="MurCD N-terminal domain"/>
    <property type="match status" value="1"/>
</dbReference>
<dbReference type="SUPFAM" id="SSF53623">
    <property type="entry name" value="MurD-like peptide ligases, catalytic domain"/>
    <property type="match status" value="1"/>
</dbReference>
<dbReference type="SUPFAM" id="SSF53244">
    <property type="entry name" value="MurD-like peptide ligases, peptide-binding domain"/>
    <property type="match status" value="1"/>
</dbReference>
<feature type="chain" id="PRO_0000242609" description="UDP-N-acetylmuramate--L-alanine ligase">
    <location>
        <begin position="1"/>
        <end position="510"/>
    </location>
</feature>
<feature type="region of interest" description="Disordered" evidence="2">
    <location>
        <begin position="1"/>
        <end position="25"/>
    </location>
</feature>
<feature type="binding site" evidence="1">
    <location>
        <begin position="140"/>
        <end position="146"/>
    </location>
    <ligand>
        <name>ATP</name>
        <dbReference type="ChEBI" id="CHEBI:30616"/>
    </ligand>
</feature>
<organism>
    <name type="scientific">Synechococcus sp. (strain JA-3-3Ab)</name>
    <name type="common">Cyanobacteria bacterium Yellowstone A-Prime</name>
    <dbReference type="NCBI Taxonomy" id="321327"/>
    <lineage>
        <taxon>Bacteria</taxon>
        <taxon>Bacillati</taxon>
        <taxon>Cyanobacteriota</taxon>
        <taxon>Cyanophyceae</taxon>
        <taxon>Synechococcales</taxon>
        <taxon>Synechococcaceae</taxon>
        <taxon>Synechococcus</taxon>
    </lineage>
</organism>